<name>Y1093_OLEA2</name>
<feature type="chain" id="PRO_0000336168" description="UPF0102 protein Dde_1093">
    <location>
        <begin position="1"/>
        <end position="202"/>
    </location>
</feature>
<reference key="1">
    <citation type="journal article" date="2011" name="J. Bacteriol.">
        <title>Complete genome sequence and updated annotation of Desulfovibrio alaskensis G20.</title>
        <authorList>
            <person name="Hauser L.J."/>
            <person name="Land M.L."/>
            <person name="Brown S.D."/>
            <person name="Larimer F."/>
            <person name="Keller K.L."/>
            <person name="Rapp-Giles B.J."/>
            <person name="Price M.N."/>
            <person name="Lin M."/>
            <person name="Bruce D.C."/>
            <person name="Detter J.C."/>
            <person name="Tapia R."/>
            <person name="Han C.S."/>
            <person name="Goodwin L.A."/>
            <person name="Cheng J.F."/>
            <person name="Pitluck S."/>
            <person name="Copeland A."/>
            <person name="Lucas S."/>
            <person name="Nolan M."/>
            <person name="Lapidus A.L."/>
            <person name="Palumbo A.V."/>
            <person name="Wall J.D."/>
        </authorList>
    </citation>
    <scope>NUCLEOTIDE SEQUENCE [LARGE SCALE GENOMIC DNA]</scope>
    <source>
        <strain>ATCC BAA-1058 / DSM 17464 / G20</strain>
    </source>
</reference>
<keyword id="KW-1185">Reference proteome</keyword>
<proteinExistence type="inferred from homology"/>
<protein>
    <recommendedName>
        <fullName evidence="1">UPF0102 protein Dde_1093</fullName>
    </recommendedName>
</protein>
<dbReference type="EMBL" id="CP000112">
    <property type="protein sequence ID" value="ABB37894.1"/>
    <property type="molecule type" value="Genomic_DNA"/>
</dbReference>
<dbReference type="SMR" id="Q313K2"/>
<dbReference type="STRING" id="207559.Dde_1093"/>
<dbReference type="KEGG" id="dde:Dde_1093"/>
<dbReference type="eggNOG" id="COG0792">
    <property type="taxonomic scope" value="Bacteria"/>
</dbReference>
<dbReference type="HOGENOM" id="CLU_1352793_0_0_7"/>
<dbReference type="Proteomes" id="UP000002710">
    <property type="component" value="Chromosome"/>
</dbReference>
<dbReference type="GO" id="GO:0003676">
    <property type="term" value="F:nucleic acid binding"/>
    <property type="evidence" value="ECO:0007669"/>
    <property type="project" value="InterPro"/>
</dbReference>
<dbReference type="CDD" id="cd20736">
    <property type="entry name" value="PoNe_Nuclease"/>
    <property type="match status" value="1"/>
</dbReference>
<dbReference type="Gene3D" id="3.40.1350.10">
    <property type="match status" value="1"/>
</dbReference>
<dbReference type="HAMAP" id="MF_00048">
    <property type="entry name" value="UPF0102"/>
    <property type="match status" value="1"/>
</dbReference>
<dbReference type="InterPro" id="IPR011335">
    <property type="entry name" value="Restrct_endonuc-II-like"/>
</dbReference>
<dbReference type="InterPro" id="IPR011856">
    <property type="entry name" value="tRNA_endonuc-like_dom_sf"/>
</dbReference>
<dbReference type="InterPro" id="IPR003509">
    <property type="entry name" value="UPF0102_YraN-like"/>
</dbReference>
<dbReference type="PANTHER" id="PTHR34039">
    <property type="entry name" value="UPF0102 PROTEIN YRAN"/>
    <property type="match status" value="1"/>
</dbReference>
<dbReference type="PANTHER" id="PTHR34039:SF1">
    <property type="entry name" value="UPF0102 PROTEIN YRAN"/>
    <property type="match status" value="1"/>
</dbReference>
<dbReference type="Pfam" id="PF02021">
    <property type="entry name" value="UPF0102"/>
    <property type="match status" value="1"/>
</dbReference>
<dbReference type="SUPFAM" id="SSF52980">
    <property type="entry name" value="Restriction endonuclease-like"/>
    <property type="match status" value="1"/>
</dbReference>
<gene>
    <name type="ordered locus">Dde_1093</name>
</gene>
<sequence>MVARRAAGSCPAHIAAGRLGEEAACAYLAASGMRILARNWRAGHLELDIIAQDNGTIVFAEVKTRAARGLESPHEALTPAKRSRLVRAAGMWLSSNDMWDRPCRFDLVCVTTEARAPEPEQMSLQAARAAGTAQARRAAGSGLPGILGKAASRLFGAGSPQRSHRAGGAPDSPEQLLRVEHIPHAFDLSESLGGGDAAWQPW</sequence>
<evidence type="ECO:0000255" key="1">
    <source>
        <dbReference type="HAMAP-Rule" id="MF_00048"/>
    </source>
</evidence>
<comment type="similarity">
    <text evidence="1">Belongs to the UPF0102 family.</text>
</comment>
<organism>
    <name type="scientific">Oleidesulfovibrio alaskensis (strain ATCC BAA-1058 / DSM 17464 / G20)</name>
    <name type="common">Desulfovibrio alaskensis</name>
    <dbReference type="NCBI Taxonomy" id="207559"/>
    <lineage>
        <taxon>Bacteria</taxon>
        <taxon>Pseudomonadati</taxon>
        <taxon>Thermodesulfobacteriota</taxon>
        <taxon>Desulfovibrionia</taxon>
        <taxon>Desulfovibrionales</taxon>
        <taxon>Desulfovibrionaceae</taxon>
        <taxon>Oleidesulfovibrio</taxon>
    </lineage>
</organism>
<accession>Q313K2</accession>